<evidence type="ECO:0000250" key="1">
    <source>
        <dbReference type="UniProtKB" id="P25526"/>
    </source>
</evidence>
<evidence type="ECO:0000255" key="2">
    <source>
        <dbReference type="PROSITE-ProRule" id="PRU10008"/>
    </source>
</evidence>
<evidence type="ECO:0000269" key="3">
    <source>
    </source>
</evidence>
<evidence type="ECO:0000269" key="4">
    <source>
    </source>
</evidence>
<evidence type="ECO:0000269" key="5">
    <source>
    </source>
</evidence>
<evidence type="ECO:0000269" key="6">
    <source>
    </source>
</evidence>
<evidence type="ECO:0000269" key="7">
    <source>
    </source>
</evidence>
<evidence type="ECO:0000305" key="8"/>
<evidence type="ECO:0007829" key="9">
    <source>
        <dbReference type="PDB" id="8QMQ"/>
    </source>
</evidence>
<evidence type="ECO:0007829" key="10">
    <source>
        <dbReference type="PDB" id="8QMS"/>
    </source>
</evidence>
<proteinExistence type="evidence at protein level"/>
<comment type="function">
    <text evidence="3 4 6 7">Catalyzes the NAD(+)-dependent oxidation of succinate semialdehyde to succinate. It acts preferentially with NAD as cosubstrate but can also use NADP. Prevents the toxic accumulation of succinate semialdehyde (SSA) and plays an important role when arginine and putrescine are used as the sole nitrogen or carbon sources.</text>
</comment>
<comment type="catalytic activity">
    <reaction evidence="3">
        <text>succinate semialdehyde + NAD(+) + H2O = succinate + NADH + 2 H(+)</text>
        <dbReference type="Rhea" id="RHEA:13217"/>
        <dbReference type="ChEBI" id="CHEBI:15377"/>
        <dbReference type="ChEBI" id="CHEBI:15378"/>
        <dbReference type="ChEBI" id="CHEBI:30031"/>
        <dbReference type="ChEBI" id="CHEBI:57540"/>
        <dbReference type="ChEBI" id="CHEBI:57706"/>
        <dbReference type="ChEBI" id="CHEBI:57945"/>
        <dbReference type="EC" id="1.2.1.16"/>
    </reaction>
</comment>
<comment type="catalytic activity">
    <reaction evidence="3">
        <text>succinate semialdehyde + NADP(+) + H2O = succinate + NADPH + 2 H(+)</text>
        <dbReference type="Rhea" id="RHEA:13213"/>
        <dbReference type="ChEBI" id="CHEBI:15377"/>
        <dbReference type="ChEBI" id="CHEBI:15378"/>
        <dbReference type="ChEBI" id="CHEBI:30031"/>
        <dbReference type="ChEBI" id="CHEBI:57706"/>
        <dbReference type="ChEBI" id="CHEBI:57783"/>
        <dbReference type="ChEBI" id="CHEBI:58349"/>
        <dbReference type="EC" id="1.2.1.16"/>
    </reaction>
</comment>
<comment type="biophysicochemical properties">
    <kinetics>
        <KM evidence="7">13.3 uM for succinate semialdehyde (with 0.6 mM NAD, at pH 8 and at 30 degrees Celsius)</KM>
        <KM evidence="7">33.7 uM for succinate semialdehyde (with 0.1 mM NAD, at pH 8 and at 30 degrees Celsius)</KM>
        <text>The enzyme reduced NADP at 15 % of the rate of NAD reduction.</text>
    </kinetics>
    <phDependence>
        <text evidence="7">Optimum pH is 8.2. Activity decreases sharply as the pH is raised above pH 9.2.</text>
    </phDependence>
</comment>
<comment type="pathway">
    <text>Amino-acid degradation; 4-aminobutanoate degradation.</text>
</comment>
<comment type="subunit">
    <text evidence="7">Homodimer.</text>
</comment>
<comment type="induction">
    <text evidence="3 4">By p-hydroxyphenylacetate, succinate semialdehyde (SSA) and putrescine. Highly expressed under several stress conditions together with many genes related to the metabolism of nitrogen compounds.</text>
</comment>
<comment type="disruption phenotype">
    <text evidence="5">Cells are unable to grow on 4-hydroxyphenylacetate.</text>
</comment>
<comment type="similarity">
    <text evidence="8">Belongs to the aldehyde dehydrogenase family.</text>
</comment>
<name>SAD_ECOLI</name>
<keyword id="KW-0002">3D-structure</keyword>
<keyword id="KW-0521">NADP</keyword>
<keyword id="KW-0560">Oxidoreductase</keyword>
<keyword id="KW-1185">Reference proteome</keyword>
<gene>
    <name type="primary">sad</name>
    <name type="synonym">yneI</name>
    <name type="ordered locus">b1525</name>
    <name type="ordered locus">JW5247</name>
</gene>
<dbReference type="EC" id="1.2.1.16"/>
<dbReference type="EMBL" id="U00096">
    <property type="protein sequence ID" value="AAC74598.2"/>
    <property type="molecule type" value="Genomic_DNA"/>
</dbReference>
<dbReference type="EMBL" id="AP009048">
    <property type="protein sequence ID" value="BAA15208.2"/>
    <property type="molecule type" value="Genomic_DNA"/>
</dbReference>
<dbReference type="PIR" id="H64906">
    <property type="entry name" value="H64906"/>
</dbReference>
<dbReference type="RefSeq" id="NP_416042.2">
    <property type="nucleotide sequence ID" value="NC_000913.3"/>
</dbReference>
<dbReference type="RefSeq" id="WP_000156615.1">
    <property type="nucleotide sequence ID" value="NZ_SSZK01000001.1"/>
</dbReference>
<dbReference type="PDB" id="8QMQ">
    <property type="method" value="X-ray"/>
    <property type="resolution" value="1.70 A"/>
    <property type="chains" value="A/B/C/D=1-462"/>
</dbReference>
<dbReference type="PDB" id="8QMR">
    <property type="method" value="X-ray"/>
    <property type="resolution" value="2.30 A"/>
    <property type="chains" value="A/B/C/D=1-462"/>
</dbReference>
<dbReference type="PDB" id="8QMS">
    <property type="method" value="X-ray"/>
    <property type="resolution" value="1.90 A"/>
    <property type="chains" value="A/B/C/D=1-462"/>
</dbReference>
<dbReference type="PDB" id="8QMT">
    <property type="method" value="X-ray"/>
    <property type="resolution" value="1.80 A"/>
    <property type="chains" value="A/B/C/D=1-462"/>
</dbReference>
<dbReference type="PDBsum" id="8QMQ"/>
<dbReference type="PDBsum" id="8QMR"/>
<dbReference type="PDBsum" id="8QMS"/>
<dbReference type="PDBsum" id="8QMT"/>
<dbReference type="SMR" id="P76149"/>
<dbReference type="BioGRID" id="4261693">
    <property type="interactions" value="19"/>
</dbReference>
<dbReference type="DIP" id="DIP-12758N"/>
<dbReference type="FunCoup" id="P76149">
    <property type="interactions" value="106"/>
</dbReference>
<dbReference type="IntAct" id="P76149">
    <property type="interactions" value="1"/>
</dbReference>
<dbReference type="STRING" id="511145.b1525"/>
<dbReference type="jPOST" id="P76149"/>
<dbReference type="PaxDb" id="511145-b1525"/>
<dbReference type="EnsemblBacteria" id="AAC74598">
    <property type="protein sequence ID" value="AAC74598"/>
    <property type="gene ID" value="b1525"/>
</dbReference>
<dbReference type="GeneID" id="947440"/>
<dbReference type="KEGG" id="ecj:JW5247"/>
<dbReference type="KEGG" id="eco:b1525"/>
<dbReference type="KEGG" id="ecoc:C3026_08815"/>
<dbReference type="PATRIC" id="fig|1411691.4.peg.741"/>
<dbReference type="EchoBASE" id="EB3578"/>
<dbReference type="eggNOG" id="COG1012">
    <property type="taxonomic scope" value="Bacteria"/>
</dbReference>
<dbReference type="HOGENOM" id="CLU_005391_1_0_6"/>
<dbReference type="InParanoid" id="P76149"/>
<dbReference type="OMA" id="FPEGCFQ"/>
<dbReference type="OrthoDB" id="9812625at2"/>
<dbReference type="PhylomeDB" id="P76149"/>
<dbReference type="BioCyc" id="EcoCyc:G6811-MONOMER"/>
<dbReference type="BioCyc" id="MetaCyc:G6811-MONOMER"/>
<dbReference type="UniPathway" id="UPA00733"/>
<dbReference type="PRO" id="PR:P76149"/>
<dbReference type="Proteomes" id="UP000000625">
    <property type="component" value="Chromosome"/>
</dbReference>
<dbReference type="GO" id="GO:0004030">
    <property type="term" value="F:aldehyde dehydrogenase [NAD(P)+] activity"/>
    <property type="evidence" value="ECO:0007669"/>
    <property type="project" value="InterPro"/>
</dbReference>
<dbReference type="GO" id="GO:0042803">
    <property type="term" value="F:protein homodimerization activity"/>
    <property type="evidence" value="ECO:0000314"/>
    <property type="project" value="EcoCyc"/>
</dbReference>
<dbReference type="GO" id="GO:0004777">
    <property type="term" value="F:succinate-semialdehyde dehydrogenase (NAD+) activity"/>
    <property type="evidence" value="ECO:0000314"/>
    <property type="project" value="UniProtKB"/>
</dbReference>
<dbReference type="GO" id="GO:0036243">
    <property type="term" value="F:succinate-semialdehyde dehydrogenase (NADP+) activity"/>
    <property type="evidence" value="ECO:0007669"/>
    <property type="project" value="RHEA"/>
</dbReference>
<dbReference type="GO" id="GO:0009013">
    <property type="term" value="F:succinate-semialdehyde dehydrogenase [NAD(P)+] activity"/>
    <property type="evidence" value="ECO:0000314"/>
    <property type="project" value="EcoliWiki"/>
</dbReference>
<dbReference type="GO" id="GO:0006527">
    <property type="term" value="P:arginine catabolic process"/>
    <property type="evidence" value="ECO:0000315"/>
    <property type="project" value="EcoCyc"/>
</dbReference>
<dbReference type="GO" id="GO:0070458">
    <property type="term" value="P:cellular detoxification of nitrogen compound"/>
    <property type="evidence" value="ECO:0000314"/>
    <property type="project" value="UniProtKB"/>
</dbReference>
<dbReference type="GO" id="GO:0009450">
    <property type="term" value="P:gamma-aminobutyric acid catabolic process"/>
    <property type="evidence" value="ECO:0000315"/>
    <property type="project" value="EcoliWiki"/>
</dbReference>
<dbReference type="GO" id="GO:0009447">
    <property type="term" value="P:putrescine catabolic process"/>
    <property type="evidence" value="ECO:0000315"/>
    <property type="project" value="EcoCyc"/>
</dbReference>
<dbReference type="CDD" id="cd07100">
    <property type="entry name" value="ALDH_SSADH1_GabD1"/>
    <property type="match status" value="1"/>
</dbReference>
<dbReference type="FunFam" id="3.40.309.10:FF:000010">
    <property type="entry name" value="Gamma-aminobutyraldehyde dehydrogenase"/>
    <property type="match status" value="1"/>
</dbReference>
<dbReference type="FunFam" id="3.40.605.10:FF:000012">
    <property type="entry name" value="NAD-dependent succinate-semialdehyde dehydrogenase"/>
    <property type="match status" value="1"/>
</dbReference>
<dbReference type="Gene3D" id="3.40.605.10">
    <property type="entry name" value="Aldehyde Dehydrogenase, Chain A, domain 1"/>
    <property type="match status" value="1"/>
</dbReference>
<dbReference type="Gene3D" id="3.40.309.10">
    <property type="entry name" value="Aldehyde Dehydrogenase, Chain A, domain 2"/>
    <property type="match status" value="1"/>
</dbReference>
<dbReference type="InterPro" id="IPR016161">
    <property type="entry name" value="Ald_DH/histidinol_DH"/>
</dbReference>
<dbReference type="InterPro" id="IPR016163">
    <property type="entry name" value="Ald_DH_C"/>
</dbReference>
<dbReference type="InterPro" id="IPR016160">
    <property type="entry name" value="Ald_DH_CS_CYS"/>
</dbReference>
<dbReference type="InterPro" id="IPR016162">
    <property type="entry name" value="Ald_DH_N"/>
</dbReference>
<dbReference type="InterPro" id="IPR015590">
    <property type="entry name" value="Aldehyde_DH_dom"/>
</dbReference>
<dbReference type="InterPro" id="IPR044148">
    <property type="entry name" value="ALDH_GabD1-like"/>
</dbReference>
<dbReference type="InterPro" id="IPR047110">
    <property type="entry name" value="GABD/Sad-like"/>
</dbReference>
<dbReference type="NCBIfam" id="NF010575">
    <property type="entry name" value="PRK13968.1"/>
    <property type="match status" value="1"/>
</dbReference>
<dbReference type="PANTHER" id="PTHR43217">
    <property type="entry name" value="SUCCINATE SEMIALDEHYDE DEHYDROGENASE [NAD(P)+] SAD"/>
    <property type="match status" value="1"/>
</dbReference>
<dbReference type="PANTHER" id="PTHR43217:SF1">
    <property type="entry name" value="SUCCINATE SEMIALDEHYDE DEHYDROGENASE [NAD(P)+] SAD"/>
    <property type="match status" value="1"/>
</dbReference>
<dbReference type="Pfam" id="PF00171">
    <property type="entry name" value="Aldedh"/>
    <property type="match status" value="1"/>
</dbReference>
<dbReference type="SUPFAM" id="SSF53720">
    <property type="entry name" value="ALDH-like"/>
    <property type="match status" value="1"/>
</dbReference>
<dbReference type="PROSITE" id="PS00070">
    <property type="entry name" value="ALDEHYDE_DEHYDR_CYS"/>
    <property type="match status" value="1"/>
</dbReference>
<organism>
    <name type="scientific">Escherichia coli (strain K12)</name>
    <dbReference type="NCBI Taxonomy" id="83333"/>
    <lineage>
        <taxon>Bacteria</taxon>
        <taxon>Pseudomonadati</taxon>
        <taxon>Pseudomonadota</taxon>
        <taxon>Gammaproteobacteria</taxon>
        <taxon>Enterobacterales</taxon>
        <taxon>Enterobacteriaceae</taxon>
        <taxon>Escherichia</taxon>
    </lineage>
</organism>
<feature type="chain" id="PRO_0000056598" description="Succinate semialdehyde dehydrogenase [NAD(P)+] Sad">
    <location>
        <begin position="1"/>
        <end position="462"/>
    </location>
</feature>
<feature type="active site" description="Proton acceptor" evidence="2">
    <location>
        <position position="234"/>
    </location>
</feature>
<feature type="active site" description="Nucleophile" evidence="2">
    <location>
        <position position="268"/>
    </location>
</feature>
<feature type="binding site" evidence="1">
    <location>
        <begin position="136"/>
        <end position="137"/>
    </location>
    <ligand>
        <name>NADP(+)</name>
        <dbReference type="ChEBI" id="CHEBI:58349"/>
    </ligand>
</feature>
<feature type="binding site" evidence="1">
    <location>
        <begin position="160"/>
        <end position="163"/>
    </location>
    <ligand>
        <name>NADP(+)</name>
        <dbReference type="ChEBI" id="CHEBI:58349"/>
    </ligand>
</feature>
<feature type="binding site" evidence="1">
    <location>
        <begin position="212"/>
        <end position="213"/>
    </location>
    <ligand>
        <name>NADP(+)</name>
        <dbReference type="ChEBI" id="CHEBI:58349"/>
    </ligand>
</feature>
<feature type="binding site" evidence="1">
    <location>
        <position position="235"/>
    </location>
    <ligand>
        <name>NADP(+)</name>
        <dbReference type="ChEBI" id="CHEBI:58349"/>
    </ligand>
</feature>
<feature type="binding site" evidence="1">
    <location>
        <position position="365"/>
    </location>
    <ligand>
        <name>NADP(+)</name>
        <dbReference type="ChEBI" id="CHEBI:58349"/>
    </ligand>
</feature>
<feature type="turn" evidence="9">
    <location>
        <begin position="5"/>
        <end position="7"/>
    </location>
</feature>
<feature type="strand" evidence="9">
    <location>
        <begin position="8"/>
        <end position="12"/>
    </location>
</feature>
<feature type="turn" evidence="9">
    <location>
        <begin position="14"/>
        <end position="16"/>
    </location>
</feature>
<feature type="strand" evidence="9">
    <location>
        <begin position="19"/>
        <end position="24"/>
    </location>
</feature>
<feature type="helix" evidence="9">
    <location>
        <begin position="28"/>
        <end position="45"/>
    </location>
</feature>
<feature type="helix" evidence="9">
    <location>
        <begin position="50"/>
        <end position="66"/>
    </location>
</feature>
<feature type="helix" evidence="9">
    <location>
        <begin position="68"/>
        <end position="79"/>
    </location>
</feature>
<feature type="helix" evidence="9">
    <location>
        <begin position="83"/>
        <end position="107"/>
    </location>
</feature>
<feature type="helix" evidence="9">
    <location>
        <begin position="116"/>
        <end position="118"/>
    </location>
</feature>
<feature type="strand" evidence="9">
    <location>
        <begin position="120"/>
        <end position="126"/>
    </location>
</feature>
<feature type="strand" evidence="9">
    <location>
        <begin position="129"/>
        <end position="133"/>
    </location>
</feature>
<feature type="strand" evidence="9">
    <location>
        <begin position="136"/>
        <end position="138"/>
    </location>
</feature>
<feature type="helix" evidence="9">
    <location>
        <begin position="141"/>
        <end position="152"/>
    </location>
</feature>
<feature type="strand" evidence="9">
    <location>
        <begin position="156"/>
        <end position="160"/>
    </location>
</feature>
<feature type="helix" evidence="9">
    <location>
        <begin position="166"/>
        <end position="178"/>
    </location>
</feature>
<feature type="strand" evidence="9">
    <location>
        <begin position="186"/>
        <end position="188"/>
    </location>
</feature>
<feature type="helix" evidence="9">
    <location>
        <begin position="193"/>
        <end position="200"/>
    </location>
</feature>
<feature type="strand" evidence="9">
    <location>
        <begin position="207"/>
        <end position="212"/>
    </location>
</feature>
<feature type="helix" evidence="9">
    <location>
        <begin position="214"/>
        <end position="226"/>
    </location>
</feature>
<feature type="strand" evidence="9">
    <location>
        <begin position="230"/>
        <end position="234"/>
    </location>
</feature>
<feature type="strand" evidence="9">
    <location>
        <begin position="239"/>
        <end position="243"/>
    </location>
</feature>
<feature type="helix" evidence="9">
    <location>
        <begin position="249"/>
        <end position="261"/>
    </location>
</feature>
<feature type="helix" evidence="9">
    <location>
        <begin position="262"/>
        <end position="265"/>
    </location>
</feature>
<feature type="strand" evidence="9">
    <location>
        <begin position="271"/>
        <end position="277"/>
    </location>
</feature>
<feature type="helix" evidence="9">
    <location>
        <begin position="278"/>
        <end position="293"/>
    </location>
</feature>
<feature type="helix" evidence="9">
    <location>
        <begin position="313"/>
        <end position="328"/>
    </location>
</feature>
<feature type="strand" evidence="9">
    <location>
        <begin position="332"/>
        <end position="335"/>
    </location>
</feature>
<feature type="strand" evidence="9">
    <location>
        <begin position="342"/>
        <end position="344"/>
    </location>
</feature>
<feature type="strand" evidence="9">
    <location>
        <begin position="350"/>
        <end position="354"/>
    </location>
</feature>
<feature type="helix" evidence="9">
    <location>
        <begin position="360"/>
        <end position="363"/>
    </location>
</feature>
<feature type="strand" evidence="9">
    <location>
        <begin position="368"/>
        <end position="378"/>
    </location>
</feature>
<feature type="helix" evidence="9">
    <location>
        <begin position="379"/>
        <end position="387"/>
    </location>
</feature>
<feature type="strand" evidence="10">
    <location>
        <begin position="388"/>
        <end position="390"/>
    </location>
</feature>
<feature type="strand" evidence="9">
    <location>
        <begin position="395"/>
        <end position="398"/>
    </location>
</feature>
<feature type="helix" evidence="9">
    <location>
        <begin position="402"/>
        <end position="411"/>
    </location>
</feature>
<feature type="strand" evidence="9">
    <location>
        <begin position="414"/>
        <end position="421"/>
    </location>
</feature>
<feature type="helix" evidence="9">
    <location>
        <begin position="435"/>
        <end position="437"/>
    </location>
</feature>
<feature type="helix" evidence="9">
    <location>
        <begin position="444"/>
        <end position="449"/>
    </location>
</feature>
<feature type="strand" evidence="9">
    <location>
        <begin position="452"/>
        <end position="459"/>
    </location>
</feature>
<sequence length="462" mass="49718">MTITPATHAISINPATGEQLSVLPWAGADDIENALQLAAAGFRDWRETNIDYRAEKLRDIGKALRARSEEMAQMITREMGKPINQARAEVAKSANLCDWYAEHGPAMLKAEPTLVENQQAVIEYRPLGTILAIMPWNFPLWQVMRGAVPIILAGNGYLLKHAPNVMGCAQLIAQVFKDAGIPQGVYGWLNADNDGVSQMIKDSRIAAVTVTGSVRAGAAIGAQAGAALKKCVLELGGSDPFIVLNDADLELAVKAAVAGRYQNTGQVCAAAKRFIIEEGIASAFTERFVAAAAALKMGDPRDEENALGPMARFDLRDELHHQVEKTLAQGARLLLGGEKMAGAGNYYPPTVLANVTPEMTAFREEMFGPVAAITIAKDAEHALELANDSEFGLSATIFTTDETQARQMAARLECGGVFINGYCASDARVAFGGVKKSGFGRELSHFGLHEFCNIQTVWKDRI</sequence>
<accession>P76149</accession>
<accession>P78220</accession>
<accession>P78286</accession>
<protein>
    <recommendedName>
        <fullName>Succinate semialdehyde dehydrogenase [NAD(P)+] Sad</fullName>
        <shortName>SSADH</shortName>
        <shortName>SSDH</shortName>
        <ecNumber>1.2.1.16</ecNumber>
    </recommendedName>
</protein>
<reference key="1">
    <citation type="journal article" date="1996" name="DNA Res.">
        <title>A 570-kb DNA sequence of the Escherichia coli K-12 genome corresponding to the 28.0-40.1 min region on the linkage map.</title>
        <authorList>
            <person name="Aiba H."/>
            <person name="Baba T."/>
            <person name="Fujita K."/>
            <person name="Hayashi K."/>
            <person name="Inada T."/>
            <person name="Isono K."/>
            <person name="Itoh T."/>
            <person name="Kasai H."/>
            <person name="Kashimoto K."/>
            <person name="Kimura S."/>
            <person name="Kitakawa M."/>
            <person name="Kitagawa M."/>
            <person name="Makino K."/>
            <person name="Miki T."/>
            <person name="Mizobuchi K."/>
            <person name="Mori H."/>
            <person name="Mori T."/>
            <person name="Motomura K."/>
            <person name="Nakade S."/>
            <person name="Nakamura Y."/>
            <person name="Nashimoto H."/>
            <person name="Nishio Y."/>
            <person name="Oshima T."/>
            <person name="Saito N."/>
            <person name="Sampei G."/>
            <person name="Seki Y."/>
            <person name="Sivasundaram S."/>
            <person name="Tagami H."/>
            <person name="Takeda J."/>
            <person name="Takemoto K."/>
            <person name="Takeuchi Y."/>
            <person name="Wada C."/>
            <person name="Yamamoto Y."/>
            <person name="Horiuchi T."/>
        </authorList>
    </citation>
    <scope>NUCLEOTIDE SEQUENCE [LARGE SCALE GENOMIC DNA]</scope>
    <source>
        <strain>K12 / W3110 / ATCC 27325 / DSM 5911</strain>
    </source>
</reference>
<reference key="2">
    <citation type="journal article" date="1997" name="Science">
        <title>The complete genome sequence of Escherichia coli K-12.</title>
        <authorList>
            <person name="Blattner F.R."/>
            <person name="Plunkett G. III"/>
            <person name="Bloch C.A."/>
            <person name="Perna N.T."/>
            <person name="Burland V."/>
            <person name="Riley M."/>
            <person name="Collado-Vides J."/>
            <person name="Glasner J.D."/>
            <person name="Rode C.K."/>
            <person name="Mayhew G.F."/>
            <person name="Gregor J."/>
            <person name="Davis N.W."/>
            <person name="Kirkpatrick H.A."/>
            <person name="Goeden M.A."/>
            <person name="Rose D.J."/>
            <person name="Mau B."/>
            <person name="Shao Y."/>
        </authorList>
    </citation>
    <scope>NUCLEOTIDE SEQUENCE [LARGE SCALE GENOMIC DNA]</scope>
    <source>
        <strain>K12 / MG1655 / ATCC 47076</strain>
    </source>
</reference>
<reference key="3">
    <citation type="journal article" date="2006" name="Mol. Syst. Biol.">
        <title>Highly accurate genome sequences of Escherichia coli K-12 strains MG1655 and W3110.</title>
        <authorList>
            <person name="Hayashi K."/>
            <person name="Morooka N."/>
            <person name="Yamamoto Y."/>
            <person name="Fujita K."/>
            <person name="Isono K."/>
            <person name="Choi S."/>
            <person name="Ohtsubo E."/>
            <person name="Baba T."/>
            <person name="Wanner B.L."/>
            <person name="Mori H."/>
            <person name="Horiuchi T."/>
        </authorList>
    </citation>
    <scope>NUCLEOTIDE SEQUENCE [LARGE SCALE GENOMIC DNA]</scope>
    <scope>SEQUENCE REVISION</scope>
    <source>
        <strain>K12 / W3110 / ATCC 27325 / DSM 5911</strain>
    </source>
</reference>
<reference key="4">
    <citation type="journal article" date="1981" name="Eur. J. Biochem.">
        <title>Succinic semialdehyde dehydrogenases of Escherichia coli: their role in the degradation of p-hydroxyphenylacetate and gamma-aminobutyrate.</title>
        <authorList>
            <person name="Donnelly M.I."/>
            <person name="Cooper R.A."/>
        </authorList>
    </citation>
    <scope>FUNCTION AS A NAD(P)-DEPENDENT SUCCINATE-SEMIALDEHYDE DEHYDROGENASE</scope>
    <scope>BIOPHYSICOCHEMICAL PROPERTIES</scope>
    <scope>SUBUNIT</scope>
    <source>
        <strain>K12</strain>
    </source>
</reference>
<reference key="5">
    <citation type="journal article" date="1981" name="J. Bacteriol.">
        <title>Two succinic semialdehyde dehydrogenases are induced when Escherichia coli K-12 Is grown on gamma-aminobutyrate.</title>
        <authorList>
            <person name="Donnelly M.I."/>
            <person name="Cooper R.A."/>
        </authorList>
    </citation>
    <scope>FUNCTION AS A NAD(P)-DEPENDENT SUCCINATE-SEMIALDEHYDE DEHYDROGENASE</scope>
    <source>
        <strain>K12</strain>
    </source>
</reference>
<reference key="6">
    <citation type="journal article" date="1982" name="Arch. Microbiol.">
        <title>An Escherichia coli mutant defective in the NAD-dependent succinate semialdehyde dehydrogenase.</title>
        <authorList>
            <person name="Skinner M.A."/>
            <person name="Cooper R.A."/>
        </authorList>
    </citation>
    <scope>DISRUPTION PHENOTYPE</scope>
    <source>
        <strain>K12</strain>
    </source>
</reference>
<reference key="7">
    <citation type="journal article" date="2007" name="J. Bacteriol.">
        <title>Computational prediction and experimental verification of the gene encoding the NAD+/NADP+-dependent succinate semialdehyde dehydrogenase in Escherichia coli.</title>
        <authorList>
            <person name="Fuhrer T."/>
            <person name="Chen L."/>
            <person name="Sauer U."/>
            <person name="Vitkup D."/>
        </authorList>
    </citation>
    <scope>FUNCTION IN THE METABOLISM OF NITROGEN COMPOUNDS AND AS A NAD(P)-DEPENDENT SUCCINATE-SEMIALDEHYDE DEHYDROGENASE</scope>
    <scope>CATALYTIC ACTIVITY</scope>
    <scope>SUBSTRATE SPECIFICITY</scope>
    <scope>INDUCTION</scope>
    <source>
        <strain>K12</strain>
    </source>
</reference>
<reference key="8">
    <citation type="journal article" date="2010" name="J. Bacteriol.">
        <title>A putrescine-inducible pathway comprising PuuE-YneI in which gamma-aminobutyrate is degraded into succinate in Escherichia coli K-12.</title>
        <authorList>
            <person name="Kurihara S."/>
            <person name="Kato K."/>
            <person name="Asada K."/>
            <person name="Kumagai H."/>
            <person name="Suzuki H."/>
        </authorList>
    </citation>
    <scope>FUNCTION IN THE METABOLISM OF CARBON COMPOUNDS</scope>
    <scope>INDUCTION</scope>
    <source>
        <strain>K12</strain>
    </source>
</reference>